<accession>Q9H741</accession>
<accession>Q53GE8</accession>
<protein>
    <recommendedName>
        <fullName evidence="3">SREBP regulating gene protein</fullName>
    </recommendedName>
    <alternativeName>
        <fullName evidence="6">SREBF pathway regulator in Golgi 1</fullName>
    </alternativeName>
</protein>
<organism>
    <name type="scientific">Homo sapiens</name>
    <name type="common">Human</name>
    <dbReference type="NCBI Taxonomy" id="9606"/>
    <lineage>
        <taxon>Eukaryota</taxon>
        <taxon>Metazoa</taxon>
        <taxon>Chordata</taxon>
        <taxon>Craniata</taxon>
        <taxon>Vertebrata</taxon>
        <taxon>Euteleostomi</taxon>
        <taxon>Mammalia</taxon>
        <taxon>Eutheria</taxon>
        <taxon>Euarchontoglires</taxon>
        <taxon>Primates</taxon>
        <taxon>Haplorrhini</taxon>
        <taxon>Catarrhini</taxon>
        <taxon>Hominidae</taxon>
        <taxon>Homo</taxon>
    </lineage>
</organism>
<proteinExistence type="evidence at protein level"/>
<evidence type="ECO:0000255" key="1"/>
<evidence type="ECO:0000269" key="2">
    <source>
    </source>
</evidence>
<evidence type="ECO:0000303" key="3">
    <source>
    </source>
</evidence>
<evidence type="ECO:0000305" key="4"/>
<evidence type="ECO:0000305" key="5">
    <source>
    </source>
</evidence>
<evidence type="ECO:0000312" key="6">
    <source>
        <dbReference type="HGNC" id="HGNC:26128"/>
    </source>
</evidence>
<evidence type="ECO:0007829" key="7">
    <source>
        <dbReference type="PDB" id="8UW8"/>
    </source>
</evidence>
<reference key="1">
    <citation type="journal article" date="2004" name="Nat. Genet.">
        <title>Complete sequencing and characterization of 21,243 full-length human cDNAs.</title>
        <authorList>
            <person name="Ota T."/>
            <person name="Suzuki Y."/>
            <person name="Nishikawa T."/>
            <person name="Otsuki T."/>
            <person name="Sugiyama T."/>
            <person name="Irie R."/>
            <person name="Wakamatsu A."/>
            <person name="Hayashi K."/>
            <person name="Sato H."/>
            <person name="Nagai K."/>
            <person name="Kimura K."/>
            <person name="Makita H."/>
            <person name="Sekine M."/>
            <person name="Obayashi M."/>
            <person name="Nishi T."/>
            <person name="Shibahara T."/>
            <person name="Tanaka T."/>
            <person name="Ishii S."/>
            <person name="Yamamoto J."/>
            <person name="Saito K."/>
            <person name="Kawai Y."/>
            <person name="Isono Y."/>
            <person name="Nakamura Y."/>
            <person name="Nagahari K."/>
            <person name="Murakami K."/>
            <person name="Yasuda T."/>
            <person name="Iwayanagi T."/>
            <person name="Wagatsuma M."/>
            <person name="Shiratori A."/>
            <person name="Sudo H."/>
            <person name="Hosoiri T."/>
            <person name="Kaku Y."/>
            <person name="Kodaira H."/>
            <person name="Kondo H."/>
            <person name="Sugawara M."/>
            <person name="Takahashi M."/>
            <person name="Kanda K."/>
            <person name="Yokoi T."/>
            <person name="Furuya T."/>
            <person name="Kikkawa E."/>
            <person name="Omura Y."/>
            <person name="Abe K."/>
            <person name="Kamihara K."/>
            <person name="Katsuta N."/>
            <person name="Sato K."/>
            <person name="Tanikawa M."/>
            <person name="Yamazaki M."/>
            <person name="Ninomiya K."/>
            <person name="Ishibashi T."/>
            <person name="Yamashita H."/>
            <person name="Murakawa K."/>
            <person name="Fujimori K."/>
            <person name="Tanai H."/>
            <person name="Kimata M."/>
            <person name="Watanabe M."/>
            <person name="Hiraoka S."/>
            <person name="Chiba Y."/>
            <person name="Ishida S."/>
            <person name="Ono Y."/>
            <person name="Takiguchi S."/>
            <person name="Watanabe S."/>
            <person name="Yosida M."/>
            <person name="Hotuta T."/>
            <person name="Kusano J."/>
            <person name="Kanehori K."/>
            <person name="Takahashi-Fujii A."/>
            <person name="Hara H."/>
            <person name="Tanase T.-O."/>
            <person name="Nomura Y."/>
            <person name="Togiya S."/>
            <person name="Komai F."/>
            <person name="Hara R."/>
            <person name="Takeuchi K."/>
            <person name="Arita M."/>
            <person name="Imose N."/>
            <person name="Musashino K."/>
            <person name="Yuuki H."/>
            <person name="Oshima A."/>
            <person name="Sasaki N."/>
            <person name="Aotsuka S."/>
            <person name="Yoshikawa Y."/>
            <person name="Matsunawa H."/>
            <person name="Ichihara T."/>
            <person name="Shiohata N."/>
            <person name="Sano S."/>
            <person name="Moriya S."/>
            <person name="Momiyama H."/>
            <person name="Satoh N."/>
            <person name="Takami S."/>
            <person name="Terashima Y."/>
            <person name="Suzuki O."/>
            <person name="Nakagawa S."/>
            <person name="Senoh A."/>
            <person name="Mizoguchi H."/>
            <person name="Goto Y."/>
            <person name="Shimizu F."/>
            <person name="Wakebe H."/>
            <person name="Hishigaki H."/>
            <person name="Watanabe T."/>
            <person name="Sugiyama A."/>
            <person name="Takemoto M."/>
            <person name="Kawakami B."/>
            <person name="Yamazaki M."/>
            <person name="Watanabe K."/>
            <person name="Kumagai A."/>
            <person name="Itakura S."/>
            <person name="Fukuzumi Y."/>
            <person name="Fujimori Y."/>
            <person name="Komiyama M."/>
            <person name="Tashiro H."/>
            <person name="Tanigami A."/>
            <person name="Fujiwara T."/>
            <person name="Ono T."/>
            <person name="Yamada K."/>
            <person name="Fujii Y."/>
            <person name="Ozaki K."/>
            <person name="Hirao M."/>
            <person name="Ohmori Y."/>
            <person name="Kawabata A."/>
            <person name="Hikiji T."/>
            <person name="Kobatake N."/>
            <person name="Inagaki H."/>
            <person name="Ikema Y."/>
            <person name="Okamoto S."/>
            <person name="Okitani R."/>
            <person name="Kawakami T."/>
            <person name="Noguchi S."/>
            <person name="Itoh T."/>
            <person name="Shigeta K."/>
            <person name="Senba T."/>
            <person name="Matsumura K."/>
            <person name="Nakajima Y."/>
            <person name="Mizuno T."/>
            <person name="Morinaga M."/>
            <person name="Sasaki M."/>
            <person name="Togashi T."/>
            <person name="Oyama M."/>
            <person name="Hata H."/>
            <person name="Watanabe M."/>
            <person name="Komatsu T."/>
            <person name="Mizushima-Sugano J."/>
            <person name="Satoh T."/>
            <person name="Shirai Y."/>
            <person name="Takahashi Y."/>
            <person name="Nakagawa K."/>
            <person name="Okumura K."/>
            <person name="Nagase T."/>
            <person name="Nomura N."/>
            <person name="Kikuchi H."/>
            <person name="Masuho Y."/>
            <person name="Yamashita R."/>
            <person name="Nakai K."/>
            <person name="Yada T."/>
            <person name="Nakamura Y."/>
            <person name="Ohara O."/>
            <person name="Isogai T."/>
            <person name="Sugano S."/>
        </authorList>
    </citation>
    <scope>NUCLEOTIDE SEQUENCE [LARGE SCALE MRNA]</scope>
    <source>
        <tissue>Colon</tissue>
    </source>
</reference>
<reference key="2">
    <citation type="submission" date="2005-04" db="EMBL/GenBank/DDBJ databases">
        <authorList>
            <person name="Suzuki Y."/>
            <person name="Sugano S."/>
            <person name="Totoki Y."/>
            <person name="Toyoda A."/>
            <person name="Takeda T."/>
            <person name="Sakaki Y."/>
            <person name="Tanaka A."/>
            <person name="Yokoyama S."/>
        </authorList>
    </citation>
    <scope>NUCLEOTIDE SEQUENCE [LARGE SCALE MRNA]</scope>
    <source>
        <tissue>Small intestine</tissue>
    </source>
</reference>
<reference key="3">
    <citation type="journal article" date="2004" name="Genome Res.">
        <title>The status, quality, and expansion of the NIH full-length cDNA project: the Mammalian Gene Collection (MGC).</title>
        <authorList>
            <consortium name="The MGC Project Team"/>
        </authorList>
    </citation>
    <scope>NUCLEOTIDE SEQUENCE [LARGE SCALE MRNA]</scope>
    <source>
        <tissue>Cervix</tissue>
    </source>
</reference>
<reference key="4">
    <citation type="journal article" date="2020" name="Nat. Commun.">
        <title>Haploid genetic screens identify SPRING/C12ORF49 as a determinant of SREBP signaling and cholesterol metabolism.</title>
        <authorList>
            <person name="Loregger A."/>
            <person name="Raaben M."/>
            <person name="Nieuwenhuis J."/>
            <person name="Tan J.M.E."/>
            <person name="Jae L.T."/>
            <person name="van den Hengel L.G."/>
            <person name="Hendrix S."/>
            <person name="van den Berg M."/>
            <person name="Scheij S."/>
            <person name="Song J.Y."/>
            <person name="Huijbers I.J."/>
            <person name="Kroese L.J."/>
            <person name="Ottenhoff R."/>
            <person name="van Weeghel M."/>
            <person name="van de Sluis B."/>
            <person name="Brummelkamp T."/>
            <person name="Zelcer N."/>
        </authorList>
    </citation>
    <scope>FUNCTION</scope>
    <scope>SUBCELLULAR LOCATION</scope>
    <scope>TOPOLOGY</scope>
    <scope>GLYCOSYLATION AT ASN-67</scope>
    <scope>MUTAGENESIS OF ASN-67</scope>
    <scope>INTERACTION WITH SCAP</scope>
</reference>
<name>SPRNG_HUMAN</name>
<dbReference type="EMBL" id="AK025068">
    <property type="protein sequence ID" value="BAB15058.1"/>
    <property type="molecule type" value="mRNA"/>
</dbReference>
<dbReference type="EMBL" id="AK222983">
    <property type="protein sequence ID" value="BAD96703.1"/>
    <property type="molecule type" value="mRNA"/>
</dbReference>
<dbReference type="EMBL" id="BC019843">
    <property type="protein sequence ID" value="AAH19843.1"/>
    <property type="molecule type" value="mRNA"/>
</dbReference>
<dbReference type="CCDS" id="CCDS9179.1"/>
<dbReference type="RefSeq" id="NP_079014.1">
    <property type="nucleotide sequence ID" value="NM_024738.4"/>
</dbReference>
<dbReference type="PDB" id="8UW8">
    <property type="method" value="EM"/>
    <property type="resolution" value="2.30 A"/>
    <property type="chains" value="B=36-205"/>
</dbReference>
<dbReference type="PDBsum" id="8UW8"/>
<dbReference type="EMDB" id="EMD-42639"/>
<dbReference type="SMR" id="Q9H741"/>
<dbReference type="BioGRID" id="122892">
    <property type="interactions" value="259"/>
</dbReference>
<dbReference type="FunCoup" id="Q9H741">
    <property type="interactions" value="628"/>
</dbReference>
<dbReference type="IntAct" id="Q9H741">
    <property type="interactions" value="40"/>
</dbReference>
<dbReference type="STRING" id="9606.ENSP00000261318"/>
<dbReference type="GlyCosmos" id="Q9H741">
    <property type="glycosylation" value="1 site, No reported glycans"/>
</dbReference>
<dbReference type="GlyGen" id="Q9H741">
    <property type="glycosylation" value="8 sites, 1 N-linked glycan (1 site), 1 O-linked glycan (2 sites)"/>
</dbReference>
<dbReference type="iPTMnet" id="Q9H741"/>
<dbReference type="PhosphoSitePlus" id="Q9H741"/>
<dbReference type="BioMuta" id="C12orf49"/>
<dbReference type="DMDM" id="74733622"/>
<dbReference type="MassIVE" id="Q9H741"/>
<dbReference type="PaxDb" id="9606-ENSP00000261318"/>
<dbReference type="PeptideAtlas" id="Q9H741"/>
<dbReference type="ProteomicsDB" id="81078"/>
<dbReference type="Antibodypedia" id="31314">
    <property type="antibodies" value="95 antibodies from 17 providers"/>
</dbReference>
<dbReference type="DNASU" id="79794"/>
<dbReference type="Ensembl" id="ENST00000261318.5">
    <property type="protein sequence ID" value="ENSP00000261318.3"/>
    <property type="gene ID" value="ENSG00000111412.6"/>
</dbReference>
<dbReference type="GeneID" id="79794"/>
<dbReference type="KEGG" id="hsa:79794"/>
<dbReference type="MANE-Select" id="ENST00000261318.5">
    <property type="protein sequence ID" value="ENSP00000261318.3"/>
    <property type="RefSeq nucleotide sequence ID" value="NM_024738.4"/>
    <property type="RefSeq protein sequence ID" value="NP_079014.1"/>
</dbReference>
<dbReference type="UCSC" id="uc001tvz.2">
    <property type="organism name" value="human"/>
</dbReference>
<dbReference type="AGR" id="HGNC:26128"/>
<dbReference type="CTD" id="79794"/>
<dbReference type="DisGeNET" id="79794"/>
<dbReference type="GeneCards" id="SPRING1"/>
<dbReference type="HGNC" id="HGNC:26128">
    <property type="gene designation" value="SPRING1"/>
</dbReference>
<dbReference type="HPA" id="ENSG00000111412">
    <property type="expression patterns" value="Tissue enhanced (thyroid)"/>
</dbReference>
<dbReference type="neXtProt" id="NX_Q9H741"/>
<dbReference type="OpenTargets" id="ENSG00000111412"/>
<dbReference type="PharmGKB" id="PA128394721"/>
<dbReference type="VEuPathDB" id="HostDB:ENSG00000111412"/>
<dbReference type="eggNOG" id="KOG3136">
    <property type="taxonomic scope" value="Eukaryota"/>
</dbReference>
<dbReference type="GeneTree" id="ENSGT00390000008031"/>
<dbReference type="HOGENOM" id="CLU_079455_0_0_1"/>
<dbReference type="InParanoid" id="Q9H741"/>
<dbReference type="OMA" id="CNTTSHC"/>
<dbReference type="OrthoDB" id="70142at2759"/>
<dbReference type="PAN-GO" id="Q9H741">
    <property type="GO annotations" value="0 GO annotations based on evolutionary models"/>
</dbReference>
<dbReference type="PhylomeDB" id="Q9H741"/>
<dbReference type="TreeFam" id="TF323884"/>
<dbReference type="PathwayCommons" id="Q9H741"/>
<dbReference type="SignaLink" id="Q9H741"/>
<dbReference type="BioGRID-ORCS" id="79794">
    <property type="hits" value="70 hits in 1149 CRISPR screens"/>
</dbReference>
<dbReference type="ChiTaRS" id="C12orf49">
    <property type="organism name" value="human"/>
</dbReference>
<dbReference type="GenomeRNAi" id="79794"/>
<dbReference type="Pharos" id="Q9H741">
    <property type="development level" value="Tdark"/>
</dbReference>
<dbReference type="PRO" id="PR:Q9H741"/>
<dbReference type="Proteomes" id="UP000005640">
    <property type="component" value="Chromosome 12"/>
</dbReference>
<dbReference type="RNAct" id="Q9H741">
    <property type="molecule type" value="protein"/>
</dbReference>
<dbReference type="Bgee" id="ENSG00000111412">
    <property type="expression patterns" value="Expressed in endothelial cell and 183 other cell types or tissues"/>
</dbReference>
<dbReference type="ExpressionAtlas" id="Q9H741">
    <property type="expression patterns" value="baseline and differential"/>
</dbReference>
<dbReference type="GO" id="GO:0000139">
    <property type="term" value="C:Golgi membrane"/>
    <property type="evidence" value="ECO:0000314"/>
    <property type="project" value="UniProtKB"/>
</dbReference>
<dbReference type="GO" id="GO:2000640">
    <property type="term" value="P:positive regulation of SREBP signaling pathway"/>
    <property type="evidence" value="ECO:0000315"/>
    <property type="project" value="UniProtKB"/>
</dbReference>
<dbReference type="InterPro" id="IPR019352">
    <property type="entry name" value="SPRING1"/>
</dbReference>
<dbReference type="PANTHER" id="PTHR13481">
    <property type="entry name" value="SREBP REGULATING GENE PROTEIN"/>
    <property type="match status" value="1"/>
</dbReference>
<dbReference type="PANTHER" id="PTHR13481:SF0">
    <property type="entry name" value="SREBP REGULATING GENE PROTEIN"/>
    <property type="match status" value="1"/>
</dbReference>
<dbReference type="Pfam" id="PF10218">
    <property type="entry name" value="SPRING1"/>
    <property type="match status" value="1"/>
</dbReference>
<sequence length="205" mass="23594">MVNLAAMVWRRLLRKRWVLALVFGLSLVYFLSSTFKQEERAVRDRNLLQVHDHNQPIPWKVQFNLGNSSRPSNQCRNSIQGKHLITDELGYVCERKDLLVNGCCNVNVPSTKQYCCDGCWPNGCCSAYEYCVSCCLQPNKQLLLERFLNRAAVAFQNLFMAVEDHFELCLAKCRTSSQSVQHENTYRDPIAKYCYGESPPELFPA</sequence>
<comment type="function">
    <text evidence="2">Positively regulates hepatic SREBP signaling pathway by modulating the proper localization of SCAP (SREBP cleavage-activating protein) to the endoplasmic reticulum, thereby controlling the level of functional SCAP.</text>
</comment>
<comment type="subunit">
    <text evidence="2">Interacts with SCAP.</text>
</comment>
<comment type="interaction">
    <interactant intactId="EBI-2836158">
        <id>Q9H741</id>
    </interactant>
    <interactant intactId="EBI-948001">
        <id>Q15323</id>
        <label>KRT31</label>
    </interactant>
    <organismsDiffer>false</organismsDiffer>
    <experiments>3</experiments>
</comment>
<comment type="interaction">
    <interactant intactId="EBI-2836158">
        <id>Q9H741</id>
    </interactant>
    <interactant intactId="EBI-2130429">
        <id>Q9BYV2</id>
        <label>TRIM54</label>
    </interactant>
    <organismsDiffer>false</organismsDiffer>
    <experiments>3</experiments>
</comment>
<comment type="interaction">
    <interactant intactId="EBI-2836158">
        <id>Q9H741</id>
    </interactant>
    <interactant intactId="EBI-10243654">
        <id>Q5BVD1</id>
        <label>TTMP</label>
    </interactant>
    <organismsDiffer>false</organismsDiffer>
    <experiments>3</experiments>
</comment>
<comment type="subcellular location">
    <subcellularLocation>
        <location evidence="2">Golgi apparatus membrane</location>
        <topology evidence="1">Single-pass membrane protein</topology>
    </subcellularLocation>
</comment>
<comment type="similarity">
    <text evidence="4">Belongs to the SPRING family.</text>
</comment>
<keyword id="KW-0002">3D-structure</keyword>
<keyword id="KW-0325">Glycoprotein</keyword>
<keyword id="KW-0333">Golgi apparatus</keyword>
<keyword id="KW-0472">Membrane</keyword>
<keyword id="KW-1267">Proteomics identification</keyword>
<keyword id="KW-1185">Reference proteome</keyword>
<keyword id="KW-0812">Transmembrane</keyword>
<keyword id="KW-1133">Transmembrane helix</keyword>
<feature type="chain" id="PRO_0000294329" description="SREBP regulating gene protein">
    <location>
        <begin position="1"/>
        <end position="205"/>
    </location>
</feature>
<feature type="topological domain" description="Cytoplasmic" evidence="5">
    <location>
        <begin position="1"/>
        <end position="16"/>
    </location>
</feature>
<feature type="transmembrane region" description="Helical" evidence="1">
    <location>
        <begin position="17"/>
        <end position="35"/>
    </location>
</feature>
<feature type="topological domain" description="Lumenal" evidence="5">
    <location>
        <begin position="36"/>
        <end position="205"/>
    </location>
</feature>
<feature type="glycosylation site" description="N-linked (GlcNAc...) asparagine" evidence="2">
    <location>
        <position position="67"/>
    </location>
</feature>
<feature type="sequence variant" id="VAR_033154" description="In dbSNP:rs10507274.">
    <original>Q</original>
    <variation>R</variation>
    <location>
        <position position="55"/>
    </location>
</feature>
<feature type="mutagenesis site" description="Loss of glycosylation." evidence="2">
    <original>N</original>
    <variation>Q</variation>
    <location>
        <position position="67"/>
    </location>
</feature>
<feature type="sequence conflict" description="In Ref. 2; BAD96703." evidence="4" ref="2">
    <original>L</original>
    <variation>P</variation>
    <location>
        <position position="143"/>
    </location>
</feature>
<feature type="strand" evidence="7">
    <location>
        <begin position="82"/>
        <end position="89"/>
    </location>
</feature>
<feature type="strand" evidence="7">
    <location>
        <begin position="91"/>
        <end position="94"/>
    </location>
</feature>
<feature type="helix" evidence="7">
    <location>
        <begin position="95"/>
        <end position="97"/>
    </location>
</feature>
<feature type="strand" evidence="7">
    <location>
        <begin position="106"/>
        <end position="108"/>
    </location>
</feature>
<feature type="strand" evidence="7">
    <location>
        <begin position="123"/>
        <end position="127"/>
    </location>
</feature>
<feature type="helix" evidence="7">
    <location>
        <begin position="128"/>
        <end position="135"/>
    </location>
</feature>
<feature type="helix" evidence="7">
    <location>
        <begin position="166"/>
        <end position="172"/>
    </location>
</feature>
<feature type="helix" evidence="7">
    <location>
        <begin position="177"/>
        <end position="179"/>
    </location>
</feature>
<feature type="turn" evidence="7">
    <location>
        <begin position="182"/>
        <end position="184"/>
    </location>
</feature>
<feature type="strand" evidence="7">
    <location>
        <begin position="185"/>
        <end position="187"/>
    </location>
</feature>
<feature type="helix" evidence="7">
    <location>
        <begin position="189"/>
        <end position="191"/>
    </location>
</feature>
<gene>
    <name evidence="6" type="primary">SPRING1</name>
    <name evidence="6" type="synonym">C12orf49</name>
    <name evidence="3" type="synonym">SPRING</name>
</gene>